<evidence type="ECO:0000255" key="1">
    <source>
        <dbReference type="HAMAP-Rule" id="MF_01972"/>
    </source>
</evidence>
<evidence type="ECO:0000269" key="2">
    <source>
    </source>
</evidence>
<evidence type="ECO:0000269" key="3">
    <source>
    </source>
</evidence>
<evidence type="ECO:0007744" key="4">
    <source>
        <dbReference type="PDB" id="2NW7"/>
    </source>
</evidence>
<evidence type="ECO:0007744" key="5">
    <source>
        <dbReference type="PDB" id="2NW8"/>
    </source>
</evidence>
<evidence type="ECO:0007744" key="6">
    <source>
        <dbReference type="PDB" id="2NW9"/>
    </source>
</evidence>
<evidence type="ECO:0007744" key="7">
    <source>
        <dbReference type="PDB" id="3BK9"/>
    </source>
</evidence>
<evidence type="ECO:0007744" key="8">
    <source>
        <dbReference type="PDB" id="3E08"/>
    </source>
</evidence>
<evidence type="ECO:0007829" key="9">
    <source>
        <dbReference type="PDB" id="2NW8"/>
    </source>
</evidence>
<organism>
    <name type="scientific">Xanthomonas campestris pv. campestris (strain ATCC 33913 / DSM 3586 / NCPPB 528 / LMG 568 / P 25)</name>
    <dbReference type="NCBI Taxonomy" id="190485"/>
    <lineage>
        <taxon>Bacteria</taxon>
        <taxon>Pseudomonadati</taxon>
        <taxon>Pseudomonadota</taxon>
        <taxon>Gammaproteobacteria</taxon>
        <taxon>Lysobacterales</taxon>
        <taxon>Lysobacteraceae</taxon>
        <taxon>Xanthomonas</taxon>
    </lineage>
</organism>
<comment type="function">
    <text evidence="1 2 3">Heme-dependent dioxygenase that catalyzes the oxidative cleavage of the L-tryptophan (L-Trp) pyrrole ring and converts L-tryptophan to N-formyl-L-kynurenine. Catalyzes the oxidative cleavage of the indole moiety.</text>
</comment>
<comment type="catalytic activity">
    <reaction evidence="1 2 3">
        <text>L-tryptophan + O2 = N-formyl-L-kynurenine</text>
        <dbReference type="Rhea" id="RHEA:24536"/>
        <dbReference type="ChEBI" id="CHEBI:15379"/>
        <dbReference type="ChEBI" id="CHEBI:57912"/>
        <dbReference type="ChEBI" id="CHEBI:58629"/>
        <dbReference type="EC" id="1.13.11.11"/>
    </reaction>
</comment>
<comment type="cofactor">
    <cofactor evidence="1 3">
        <name>heme</name>
        <dbReference type="ChEBI" id="CHEBI:30413"/>
    </cofactor>
    <text evidence="1 3">Binds 1 heme group per subunit.</text>
</comment>
<comment type="activity regulation">
    <text evidence="2">Weakly inhibited by D-tryptophan.</text>
</comment>
<comment type="biophysicochemical properties">
    <kinetics>
        <KM evidence="2 3">114 uM for L-tryptophan</KM>
        <KM evidence="2 3">100 uM for 5-fluoro-D/L-tryptophan</KM>
        <KM evidence="2 3">186 uM for 6-fluoro-D/L-tryptophan</KM>
        <KM evidence="2 3">357 uM for 5-methyl-D/L-tryptophan</KM>
        <KM evidence="2 3">975 uM for 6-methyl-D/L-tryptophan</KM>
        <KM evidence="2 3">119 uM for O(2)</KM>
    </kinetics>
</comment>
<comment type="pathway">
    <text evidence="1">Amino-acid degradation; L-tryptophan degradation via kynurenine pathway; L-kynurenine from L-tryptophan: step 1/2.</text>
</comment>
<comment type="subunit">
    <text evidence="1 2 3">Homotetramer.</text>
</comment>
<comment type="similarity">
    <text evidence="1">Belongs to the tryptophan 2,3-dioxygenase family.</text>
</comment>
<reference key="1">
    <citation type="journal article" date="2002" name="Nature">
        <title>Comparison of the genomes of two Xanthomonas pathogens with differing host specificities.</title>
        <authorList>
            <person name="da Silva A.C.R."/>
            <person name="Ferro J.A."/>
            <person name="Reinach F.C."/>
            <person name="Farah C.S."/>
            <person name="Furlan L.R."/>
            <person name="Quaggio R.B."/>
            <person name="Monteiro-Vitorello C.B."/>
            <person name="Van Sluys M.A."/>
            <person name="Almeida N.F. Jr."/>
            <person name="Alves L.M.C."/>
            <person name="do Amaral A.M."/>
            <person name="Bertolini M.C."/>
            <person name="Camargo L.E.A."/>
            <person name="Camarotte G."/>
            <person name="Cannavan F."/>
            <person name="Cardozo J."/>
            <person name="Chambergo F."/>
            <person name="Ciapina L.P."/>
            <person name="Cicarelli R.M.B."/>
            <person name="Coutinho L.L."/>
            <person name="Cursino-Santos J.R."/>
            <person name="El-Dorry H."/>
            <person name="Faria J.B."/>
            <person name="Ferreira A.J.S."/>
            <person name="Ferreira R.C.C."/>
            <person name="Ferro M.I.T."/>
            <person name="Formighieri E.F."/>
            <person name="Franco M.C."/>
            <person name="Greggio C.C."/>
            <person name="Gruber A."/>
            <person name="Katsuyama A.M."/>
            <person name="Kishi L.T."/>
            <person name="Leite R.P."/>
            <person name="Lemos E.G.M."/>
            <person name="Lemos M.V.F."/>
            <person name="Locali E.C."/>
            <person name="Machado M.A."/>
            <person name="Madeira A.M.B.N."/>
            <person name="Martinez-Rossi N.M."/>
            <person name="Martins E.C."/>
            <person name="Meidanis J."/>
            <person name="Menck C.F.M."/>
            <person name="Miyaki C.Y."/>
            <person name="Moon D.H."/>
            <person name="Moreira L.M."/>
            <person name="Novo M.T.M."/>
            <person name="Okura V.K."/>
            <person name="Oliveira M.C."/>
            <person name="Oliveira V.R."/>
            <person name="Pereira H.A."/>
            <person name="Rossi A."/>
            <person name="Sena J.A.D."/>
            <person name="Silva C."/>
            <person name="de Souza R.F."/>
            <person name="Spinola L.A.F."/>
            <person name="Takita M.A."/>
            <person name="Tamura R.E."/>
            <person name="Teixeira E.C."/>
            <person name="Tezza R.I.D."/>
            <person name="Trindade dos Santos M."/>
            <person name="Truffi D."/>
            <person name="Tsai S.M."/>
            <person name="White F.F."/>
            <person name="Setubal J.C."/>
            <person name="Kitajima J.P."/>
        </authorList>
    </citation>
    <scope>NUCLEOTIDE SEQUENCE [LARGE SCALE GENOMIC DNA]</scope>
    <source>
        <strain>ATCC 33913 / DSM 3586 / NCPPB 528 / LMG 568 / P 25</strain>
    </source>
</reference>
<reference key="2">
    <citation type="journal article" date="2007" name="Proc. Natl. Acad. Sci. U.S.A.">
        <title>Molecular insights into substrate recognition and catalysis by tryptophan 2,3-dioxygenase.</title>
        <authorList>
            <person name="Forouhar F."/>
            <person name="Anderson J.L.R."/>
            <person name="Mowat C.G."/>
            <person name="Vorobiev S.M."/>
            <person name="Hussain A."/>
            <person name="Abashidze M."/>
            <person name="Bruckmann C."/>
            <person name="Thackray S.J."/>
            <person name="Seetharaman J."/>
            <person name="Tucker T."/>
            <person name="Xiao R."/>
            <person name="Ma L.-C."/>
            <person name="Zhao L."/>
            <person name="Acton T.B."/>
            <person name="Montelione G.T."/>
            <person name="Chapman S.K."/>
            <person name="Tong L."/>
        </authorList>
    </citation>
    <scope>X-RAY CRYSTALLOGRAPHY (1.6 ANGSTROMS) OF APOENZYME AND IN COMPLEX WITH L-TRYPTOPHAN AND HEME</scope>
    <scope>FUNCTION</scope>
    <scope>CATALYTIC ACTIVITY</scope>
    <scope>ACTIVITY REGULATION</scope>
    <scope>KINETIC PARAMETERS</scope>
    <scope>HOMOTETRAMERIZATION</scope>
    <scope>MUTAGENESIS OF HIS-55</scope>
</reference>
<reference key="3">
    <citation type="journal article" date="2008" name="Biochemistry">
        <title>Histidine 55 of tryptophan 2,3-dioxygenase is not an active site base but regulates catalysis by controlling substrate binding.</title>
        <authorList>
            <person name="Thackray S.J."/>
            <person name="Bruckmann C."/>
            <person name="Anderson J.L.R."/>
            <person name="Campbell L.P."/>
            <person name="Xiao R."/>
            <person name="Zhao L."/>
            <person name="Mowat C.G."/>
            <person name="Forouhar F."/>
            <person name="Tong L."/>
            <person name="Chapman S.K."/>
        </authorList>
    </citation>
    <scope>X-RAY CRYSTALLOGRAPHY (1.9 ANGSTROMS) OF MUTANTS ALA-55 AND SER-55 IN COMPLEX WITH L-TRYPTOPHAN AND HEME</scope>
    <scope>FUNCTION</scope>
    <scope>CATALYTIC ACTIVITY</scope>
    <scope>KINETIC PARAMETERS</scope>
    <scope>BIOPHYSICOCHEMICAL PROPERTIES</scope>
    <scope>SUBUNIT</scope>
    <scope>HOMOTETRAMERIZATION</scope>
    <scope>MUTAGENESIS OF HIS-55</scope>
</reference>
<dbReference type="EC" id="1.13.11.11" evidence="1"/>
<dbReference type="EMBL" id="AE008922">
    <property type="protein sequence ID" value="AAM39750.1"/>
    <property type="molecule type" value="Genomic_DNA"/>
</dbReference>
<dbReference type="RefSeq" id="NP_635826.1">
    <property type="nucleotide sequence ID" value="NC_003902.1"/>
</dbReference>
<dbReference type="RefSeq" id="WP_011035685.1">
    <property type="nucleotide sequence ID" value="NC_003902.1"/>
</dbReference>
<dbReference type="PDB" id="1YW0">
    <property type="method" value="X-ray"/>
    <property type="resolution" value="2.70 A"/>
    <property type="chains" value="A/B/C/D=23-298"/>
</dbReference>
<dbReference type="PDB" id="2NW7">
    <property type="method" value="X-ray"/>
    <property type="resolution" value="2.70 A"/>
    <property type="chains" value="A/B/C/D=1-298"/>
</dbReference>
<dbReference type="PDB" id="2NW8">
    <property type="method" value="X-ray"/>
    <property type="resolution" value="1.60 A"/>
    <property type="chains" value="A/B=1-298"/>
</dbReference>
<dbReference type="PDB" id="2NW9">
    <property type="method" value="X-ray"/>
    <property type="resolution" value="1.80 A"/>
    <property type="chains" value="A/B=1-298"/>
</dbReference>
<dbReference type="PDB" id="3BK9">
    <property type="method" value="X-ray"/>
    <property type="resolution" value="2.15 A"/>
    <property type="chains" value="A/B/C/D/E/F/G/H=1-298"/>
</dbReference>
<dbReference type="PDB" id="3E08">
    <property type="method" value="X-ray"/>
    <property type="resolution" value="1.90 A"/>
    <property type="chains" value="A/B/C/D/E/F/G/H=1-298"/>
</dbReference>
<dbReference type="PDB" id="7P46">
    <property type="method" value="X-ray"/>
    <property type="resolution" value="1.70 A"/>
    <property type="chains" value="A/B/C/D/E/F/G/H=5-286"/>
</dbReference>
<dbReference type="PDBsum" id="1YW0"/>
<dbReference type="PDBsum" id="2NW7"/>
<dbReference type="PDBsum" id="2NW8"/>
<dbReference type="PDBsum" id="2NW9"/>
<dbReference type="PDBsum" id="3BK9"/>
<dbReference type="PDBsum" id="3E08"/>
<dbReference type="PDBsum" id="7P46"/>
<dbReference type="SMR" id="Q8PDA8"/>
<dbReference type="DIP" id="DIP-60795N"/>
<dbReference type="STRING" id="190485.XCC0432"/>
<dbReference type="EnsemblBacteria" id="AAM39750">
    <property type="protein sequence ID" value="AAM39750"/>
    <property type="gene ID" value="XCC0432"/>
</dbReference>
<dbReference type="KEGG" id="xcc:XCC0432"/>
<dbReference type="PATRIC" id="fig|190485.4.peg.475"/>
<dbReference type="eggNOG" id="COG3483">
    <property type="taxonomic scope" value="Bacteria"/>
</dbReference>
<dbReference type="HOGENOM" id="CLU_063240_0_0_6"/>
<dbReference type="OrthoDB" id="9776847at2"/>
<dbReference type="BRENDA" id="1.13.11.11">
    <property type="organism ID" value="9230"/>
</dbReference>
<dbReference type="BRENDA" id="1.13.11.52">
    <property type="organism ID" value="6708"/>
</dbReference>
<dbReference type="SABIO-RK" id="Q8PDA8"/>
<dbReference type="UniPathway" id="UPA00333">
    <property type="reaction ID" value="UER00453"/>
</dbReference>
<dbReference type="EvolutionaryTrace" id="Q8PDA8"/>
<dbReference type="Proteomes" id="UP000001010">
    <property type="component" value="Chromosome"/>
</dbReference>
<dbReference type="GO" id="GO:0020037">
    <property type="term" value="F:heme binding"/>
    <property type="evidence" value="ECO:0000314"/>
    <property type="project" value="UniProtKB"/>
</dbReference>
<dbReference type="GO" id="GO:0046872">
    <property type="term" value="F:metal ion binding"/>
    <property type="evidence" value="ECO:0007669"/>
    <property type="project" value="UniProtKB-KW"/>
</dbReference>
<dbReference type="GO" id="GO:0004833">
    <property type="term" value="F:tryptophan 2,3-dioxygenase activity"/>
    <property type="evidence" value="ECO:0000314"/>
    <property type="project" value="UniProtKB"/>
</dbReference>
<dbReference type="GO" id="GO:0019442">
    <property type="term" value="P:L-tryptophan catabolic process to acetyl-CoA"/>
    <property type="evidence" value="ECO:0000318"/>
    <property type="project" value="GO_Central"/>
</dbReference>
<dbReference type="GO" id="GO:0019441">
    <property type="term" value="P:L-tryptophan catabolic process to kynurenine"/>
    <property type="evidence" value="ECO:0000314"/>
    <property type="project" value="UniProtKB"/>
</dbReference>
<dbReference type="FunFam" id="1.20.58.480:FF:000001">
    <property type="entry name" value="Tryptophan 2,3-dioxygenase"/>
    <property type="match status" value="1"/>
</dbReference>
<dbReference type="Gene3D" id="1.20.58.480">
    <property type="match status" value="1"/>
</dbReference>
<dbReference type="HAMAP" id="MF_01972">
    <property type="entry name" value="T23O"/>
    <property type="match status" value="1"/>
</dbReference>
<dbReference type="InterPro" id="IPR037217">
    <property type="entry name" value="Trp/Indoleamine_2_3_dOase-like"/>
</dbReference>
<dbReference type="InterPro" id="IPR004981">
    <property type="entry name" value="Trp_2_3_dOase"/>
</dbReference>
<dbReference type="PANTHER" id="PTHR10138">
    <property type="entry name" value="TRYPTOPHAN 2,3-DIOXYGENASE"/>
    <property type="match status" value="1"/>
</dbReference>
<dbReference type="PANTHER" id="PTHR10138:SF0">
    <property type="entry name" value="TRYPTOPHAN 2,3-DIOXYGENASE"/>
    <property type="match status" value="1"/>
</dbReference>
<dbReference type="Pfam" id="PF03301">
    <property type="entry name" value="Trp_dioxygenase"/>
    <property type="match status" value="2"/>
</dbReference>
<dbReference type="SUPFAM" id="SSF140959">
    <property type="entry name" value="Indolic compounds 2,3-dioxygenase-like"/>
    <property type="match status" value="1"/>
</dbReference>
<name>T23O_XANCP</name>
<accession>Q8PDA8</accession>
<sequence>MPVDKNLRDLEPGIHTDLEGRLTYGGYLRLDQLLSAQQPLSEPAHHDEMLFIIQHQTSELWLKLLAHELRAAIVHLQRDEVWQCRKVLARSKQVLRQLTEQWSVLETLTPSEYMGFRDVLGPSSGFQSLQYRYIEFLLGNKNPQMLQVFAYDPAGQARLREVLEAPSLYEEFLRYLARFGHAIPQQYQARDWTAAHVADDTLRPVFERIYENTDRYWREYSLCEDLVDVETQFQLWRFRHMRTVMRVIGFKRGTGGSSGVGFLQQALALTFFPELFDVRTSVGVDNRPPQGSADAGKR</sequence>
<gene>
    <name evidence="1" type="primary">kynA</name>
    <name type="ordered locus">XCC0432</name>
</gene>
<keyword id="KW-0002">3D-structure</keyword>
<keyword id="KW-0223">Dioxygenase</keyword>
<keyword id="KW-0349">Heme</keyword>
<keyword id="KW-0408">Iron</keyword>
<keyword id="KW-0479">Metal-binding</keyword>
<keyword id="KW-0560">Oxidoreductase</keyword>
<keyword id="KW-1185">Reference proteome</keyword>
<keyword id="KW-0823">Tryptophan catabolism</keyword>
<protein>
    <recommendedName>
        <fullName evidence="1">Tryptophan 2,3-dioxygenase</fullName>
        <shortName evidence="1">TDO</shortName>
        <ecNumber evidence="1">1.13.11.11</ecNumber>
    </recommendedName>
    <alternativeName>
        <fullName evidence="1">Tryptamin 2,3-dioxygenase</fullName>
    </alternativeName>
    <alternativeName>
        <fullName evidence="1">Tryptophan oxygenase</fullName>
        <shortName evidence="1">TO</shortName>
        <shortName evidence="1">TRPO</shortName>
    </alternativeName>
    <alternativeName>
        <fullName evidence="1">Tryptophan pyrrolase</fullName>
    </alternativeName>
    <alternativeName>
        <fullName evidence="1">Tryptophanase</fullName>
    </alternativeName>
</protein>
<proteinExistence type="evidence at protein level"/>
<feature type="chain" id="PRO_0000360143" description="Tryptophan 2,3-dioxygenase">
    <location>
        <begin position="1"/>
        <end position="298"/>
    </location>
</feature>
<feature type="binding site" evidence="1 2 3 5 7">
    <location>
        <begin position="51"/>
        <end position="55"/>
    </location>
    <ligand>
        <name>substrate</name>
    </ligand>
</feature>
<feature type="binding site" evidence="1 2 3 5 7 8">
    <location>
        <position position="113"/>
    </location>
    <ligand>
        <name>substrate</name>
    </ligand>
</feature>
<feature type="binding site" evidence="1 2 3 5 7 8">
    <location>
        <position position="117"/>
    </location>
    <ligand>
        <name>substrate</name>
    </ligand>
</feature>
<feature type="binding site" description="axial binding residue" evidence="1 2 3 4 5 6 7 8">
    <location>
        <position position="240"/>
    </location>
    <ligand>
        <name>heme</name>
        <dbReference type="ChEBI" id="CHEBI:30413"/>
    </ligand>
    <ligandPart>
        <name>Fe</name>
        <dbReference type="ChEBI" id="CHEBI:18248"/>
    </ligandPart>
</feature>
<feature type="binding site" evidence="1 2 3 5 7 8">
    <location>
        <position position="254"/>
    </location>
    <ligand>
        <name>substrate</name>
    </ligand>
</feature>
<feature type="mutagenesis site" description="Decrease in catalytic efficiency using L-tryptophan, 5-fluoro-D/L-tryptophan, 6-fluoro-D/L-tryptophan, 5-methyl-D/L-tryptophan and 6-methyl-D/L-tryptophan as substrate." evidence="2 3">
    <original>H</original>
    <variation>A</variation>
    <location>
        <position position="55"/>
    </location>
</feature>
<feature type="mutagenesis site" description="Decrease in catalytic efficiency using L-tryptophan, 5-fluoro-D/L-tryptophan, 6-fluoro-D/L-tryptophan, 5-methyl-D/L-tryptophan and 6-methyl-D/L-tryptophan as substrate." evidence="2 3">
    <original>H</original>
    <variation>S</variation>
    <location>
        <position position="55"/>
    </location>
</feature>
<feature type="helix" evidence="9">
    <location>
        <begin position="24"/>
        <end position="27"/>
    </location>
</feature>
<feature type="helix" evidence="9">
    <location>
        <begin position="30"/>
        <end position="33"/>
    </location>
</feature>
<feature type="helix" evidence="9">
    <location>
        <begin position="48"/>
        <end position="77"/>
    </location>
</feature>
<feature type="helix" evidence="9">
    <location>
        <begin position="81"/>
        <end position="100"/>
    </location>
</feature>
<feature type="helix" evidence="9">
    <location>
        <begin position="102"/>
        <end position="105"/>
    </location>
</feature>
<feature type="helix" evidence="9">
    <location>
        <begin position="110"/>
        <end position="113"/>
    </location>
</feature>
<feature type="turn" evidence="9">
    <location>
        <begin position="114"/>
        <end position="116"/>
    </location>
</feature>
<feature type="helix" evidence="9">
    <location>
        <begin position="117"/>
        <end position="119"/>
    </location>
</feature>
<feature type="helix" evidence="9">
    <location>
        <begin position="125"/>
        <end position="127"/>
    </location>
</feature>
<feature type="helix" evidence="9">
    <location>
        <begin position="129"/>
        <end position="138"/>
    </location>
</feature>
<feature type="helix" evidence="9">
    <location>
        <begin position="143"/>
        <end position="146"/>
    </location>
</feature>
<feature type="turn" evidence="9">
    <location>
        <begin position="148"/>
        <end position="151"/>
    </location>
</feature>
<feature type="helix" evidence="9">
    <location>
        <begin position="153"/>
        <end position="163"/>
    </location>
</feature>
<feature type="helix" evidence="9">
    <location>
        <begin position="168"/>
        <end position="178"/>
    </location>
</feature>
<feature type="helix" evidence="9">
    <location>
        <begin position="185"/>
        <end position="188"/>
    </location>
</feature>
<feature type="helix" evidence="9">
    <location>
        <begin position="200"/>
        <end position="202"/>
    </location>
</feature>
<feature type="helix" evidence="9">
    <location>
        <begin position="203"/>
        <end position="211"/>
    </location>
</feature>
<feature type="turn" evidence="9">
    <location>
        <begin position="213"/>
        <end position="216"/>
    </location>
</feature>
<feature type="helix" evidence="9">
    <location>
        <begin position="217"/>
        <end position="248"/>
    </location>
</feature>
<feature type="strand" evidence="9">
    <location>
        <begin position="254"/>
        <end position="257"/>
    </location>
</feature>
<feature type="helix" evidence="9">
    <location>
        <begin position="260"/>
        <end position="266"/>
    </location>
</feature>
<feature type="helix" evidence="9">
    <location>
        <begin position="273"/>
        <end position="277"/>
    </location>
</feature>
<feature type="helix" evidence="9">
    <location>
        <begin position="278"/>
        <end position="280"/>
    </location>
</feature>
<feature type="turn" evidence="9">
    <location>
        <begin position="281"/>
        <end position="283"/>
    </location>
</feature>